<keyword id="KW-0031">Aminopeptidase</keyword>
<keyword id="KW-0325">Glycoprotein</keyword>
<keyword id="KW-0378">Hydrolase</keyword>
<keyword id="KW-0645">Protease</keyword>
<keyword id="KW-0964">Secreted</keyword>
<keyword id="KW-0720">Serine protease</keyword>
<keyword id="KW-0732">Signal</keyword>
<keyword id="KW-0843">Virulence</keyword>
<reference key="1">
    <citation type="journal article" date="1997" name="Infect. Immun.">
        <title>Dipeptidyl-peptidase IV secreted by Aspergillus fumigatus, a fungus pathogenic to humans.</title>
        <authorList>
            <person name="Beauvais A."/>
            <person name="Monod M."/>
            <person name="Wyniger J."/>
            <person name="Debeaupuis J.P."/>
            <person name="Grouzmann E."/>
            <person name="Brakch N."/>
            <person name="Svab J."/>
            <person name="Hovanessian A.G."/>
            <person name="Latge J.P."/>
        </authorList>
    </citation>
    <scope>NUCLEOTIDE SEQUENCE [GENOMIC DNA]</scope>
    <scope>SUBCELLULAR LOCATION</scope>
    <scope>FUNCTION</scope>
    <scope>BIOPHYSICOCHEMICAL PROPERTIES</scope>
</reference>
<reference key="2">
    <citation type="journal article" date="2008" name="PLoS Genet.">
        <title>Genomic islands in the pathogenic filamentous fungus Aspergillus fumigatus.</title>
        <authorList>
            <person name="Fedorova N.D."/>
            <person name="Khaldi N."/>
            <person name="Joardar V.S."/>
            <person name="Maiti R."/>
            <person name="Amedeo P."/>
            <person name="Anderson M.J."/>
            <person name="Crabtree J."/>
            <person name="Silva J.C."/>
            <person name="Badger J.H."/>
            <person name="Albarraq A."/>
            <person name="Angiuoli S."/>
            <person name="Bussey H."/>
            <person name="Bowyer P."/>
            <person name="Cotty P.J."/>
            <person name="Dyer P.S."/>
            <person name="Egan A."/>
            <person name="Galens K."/>
            <person name="Fraser-Liggett C.M."/>
            <person name="Haas B.J."/>
            <person name="Inman J.M."/>
            <person name="Kent R."/>
            <person name="Lemieux S."/>
            <person name="Malavazi I."/>
            <person name="Orvis J."/>
            <person name="Roemer T."/>
            <person name="Ronning C.M."/>
            <person name="Sundaram J.P."/>
            <person name="Sutton G."/>
            <person name="Turner G."/>
            <person name="Venter J.C."/>
            <person name="White O.R."/>
            <person name="Whitty B.R."/>
            <person name="Youngman P."/>
            <person name="Wolfe K.H."/>
            <person name="Goldman G.H."/>
            <person name="Wortman J.R."/>
            <person name="Jiang B."/>
            <person name="Denning D.W."/>
            <person name="Nierman W.C."/>
        </authorList>
    </citation>
    <scope>NUCLEOTIDE SEQUENCE [LARGE SCALE GENOMIC DNA]</scope>
    <source>
        <strain>CBS 144.89 / FGSC A1163 / CEA10</strain>
    </source>
</reference>
<organism>
    <name type="scientific">Aspergillus fumigatus (strain CBS 144.89 / FGSC A1163 / CEA10)</name>
    <name type="common">Neosartorya fumigata</name>
    <dbReference type="NCBI Taxonomy" id="451804"/>
    <lineage>
        <taxon>Eukaryota</taxon>
        <taxon>Fungi</taxon>
        <taxon>Dikarya</taxon>
        <taxon>Ascomycota</taxon>
        <taxon>Pezizomycotina</taxon>
        <taxon>Eurotiomycetes</taxon>
        <taxon>Eurotiomycetidae</taxon>
        <taxon>Eurotiales</taxon>
        <taxon>Aspergillaceae</taxon>
        <taxon>Aspergillus</taxon>
        <taxon>Aspergillus subgen. Fumigati</taxon>
    </lineage>
</organism>
<proteinExistence type="evidence at protein level"/>
<comment type="function">
    <text evidence="3">Extracellular dipeptidyl-peptidase which removes N-terminal dipeptides sequentially from polypeptides having unsubstituted N-termini provided that the penultimate residue is proline. Contributes to pathogenicity.</text>
</comment>
<comment type="catalytic activity">
    <reaction>
        <text>Release of an N-terminal dipeptide, Xaa-Yaa-|-Zaa-, from a polypeptide, preferentially when Yaa is Pro, provided Zaa is neither Pro nor hydroxyproline.</text>
        <dbReference type="EC" id="3.4.14.5"/>
    </reaction>
</comment>
<comment type="biophysicochemical properties">
    <kinetics>
        <KM evidence="3">0.38 mM for Gly-Pro pNA and Ala-Pro pNA</KM>
        <KM evidence="3">0.15 mM for Arg-Pro pNA</KM>
    </kinetics>
    <phDependence>
        <text evidence="3">Optimum pH is 6.7 to 7.0.</text>
    </phDependence>
</comment>
<comment type="subcellular location">
    <subcellularLocation>
        <location evidence="3">Secreted</location>
    </subcellularLocation>
</comment>
<comment type="similarity">
    <text evidence="4">Belongs to the peptidase S9B family.</text>
</comment>
<accession>B0Y6C5</accession>
<accession>O14425</accession>
<feature type="signal peptide" evidence="2">
    <location>
        <begin position="1"/>
        <end position="14"/>
    </location>
</feature>
<feature type="chain" id="PRO_0000397810" description="Probable dipeptidyl peptidase 4">
    <location>
        <begin position="15"/>
        <end position="765"/>
    </location>
</feature>
<feature type="active site" description="Charge relay system" evidence="1">
    <location>
        <position position="613"/>
    </location>
</feature>
<feature type="active site" description="Charge relay system" evidence="1">
    <location>
        <position position="690"/>
    </location>
</feature>
<feature type="active site" description="Charge relay system" evidence="1">
    <location>
        <position position="725"/>
    </location>
</feature>
<feature type="glycosylation site" description="N-linked (GlcNAc...) asparagine" evidence="2">
    <location>
        <position position="35"/>
    </location>
</feature>
<feature type="glycosylation site" description="N-linked (GlcNAc...) asparagine" evidence="2">
    <location>
        <position position="78"/>
    </location>
</feature>
<feature type="glycosylation site" description="N-linked (GlcNAc...) asparagine" evidence="2">
    <location>
        <position position="101"/>
    </location>
</feature>
<feature type="glycosylation site" description="N-linked (GlcNAc...) asparagine" evidence="2">
    <location>
        <position position="110"/>
    </location>
</feature>
<feature type="glycosylation site" description="N-linked (GlcNAc...) asparagine" evidence="2">
    <location>
        <position position="169"/>
    </location>
</feature>
<feature type="glycosylation site" description="N-linked (GlcNAc...) asparagine" evidence="2">
    <location>
        <position position="218"/>
    </location>
</feature>
<feature type="glycosylation site" description="N-linked (GlcNAc...) asparagine" evidence="2">
    <location>
        <position position="465"/>
    </location>
</feature>
<feature type="glycosylation site" description="N-linked (GlcNAc...) asparagine" evidence="2">
    <location>
        <position position="490"/>
    </location>
</feature>
<feature type="glycosylation site" description="N-linked (GlcNAc...) asparagine" evidence="2">
    <location>
        <position position="665"/>
    </location>
</feature>
<feature type="sequence conflict" description="In Ref. 1; AAC34310." evidence="4" ref="1">
    <original>Y</original>
    <variation>H</variation>
    <location>
        <position position="117"/>
    </location>
</feature>
<feature type="sequence conflict" description="In Ref. 1; AAC34310." evidence="4" ref="1">
    <original>D</original>
    <variation>G</variation>
    <location>
        <position position="161"/>
    </location>
</feature>
<feature type="sequence conflict" description="In Ref. 1; AAC34310." evidence="4" ref="1">
    <original>A</original>
    <variation>P</variation>
    <location>
        <position position="538"/>
    </location>
</feature>
<sequence>MKWSILLLVGCAAAIDVPRQPYAPTGSGKKRLTFNETVVKRAISPSAISVEWISTSEDGDYVYQDQDGSLKIQSIVTNHTQTLVPADKVPEDAYSYWIHPNLSSVLWATNYTKQYRYSYFADYFIQDVQSMKLRPLAPDQSGDIQYAQWSPTGDAIAFVRDNNVFVWTNASTSQITNDGGPDLFNGVPDWIYEEEILGDRFALWFSPDGAYLAFLRFNETGVPTFTVPYYMDNEEIAPPYPRELELRYPKVSQTNPTVELNLLELRTGERTPVPIDAFDAKELIIGEVAWLTGKHDVVAVKAFNRVQDRQKVVAVDVASLRSKTISERDGTDGWLDNLLSMAYIGPIGESKEEYYIDISDQSGWAHLWLFPVAGGEPIALTKGEWEVTNILSIDKPRQLVYFLSTKHHSTERHLYSVSWKTKEITPLVDDTVPAVWSASFSSQGGYYILSYRGPDVPYQDLYAINSTAPLRTITSNAAVLNALKEYTLPNITYFELALPSGETLNVMQRLPVKFSPKKKYPVLFTPYGGPGAQEVSKAWQALDFKAYIASDPELEYITWTVDNRGTGYKGRAFRCQVASRLGELEAADQVFAAQQAAKLPYVDAQHIAIWGWSYGGYLTGKVIETDSGAFSLGVQTAPVSDWRFYDSMYTERYMKTLESNAAGYNASAIRKVAGYKNVRGGVLIQHGTGDDNVHFQNAAALVDTLVGAGVTPEKLQVQWFTDSDHGIRYHGGNVFLYRQLSKRLYEEKKRKEKGEAHQWSKKSVL</sequence>
<dbReference type="EC" id="3.4.14.5"/>
<dbReference type="EMBL" id="U87950">
    <property type="protein sequence ID" value="AAC34310.1"/>
    <property type="molecule type" value="Genomic_DNA"/>
</dbReference>
<dbReference type="EMBL" id="DS499598">
    <property type="protein sequence ID" value="EDP50310.1"/>
    <property type="molecule type" value="Genomic_DNA"/>
</dbReference>
<dbReference type="SMR" id="B0Y6C5"/>
<dbReference type="ESTHER" id="aspfu-DPP4">
    <property type="family name" value="DPP4N_Peptidase_S9"/>
</dbReference>
<dbReference type="MEROPS" id="S09.008"/>
<dbReference type="GlyCosmos" id="B0Y6C5">
    <property type="glycosylation" value="9 sites, No reported glycans"/>
</dbReference>
<dbReference type="EnsemblFungi" id="EDP50310">
    <property type="protein sequence ID" value="EDP50310"/>
    <property type="gene ID" value="AFUB_066450"/>
</dbReference>
<dbReference type="VEuPathDB" id="FungiDB:AFUB_066450"/>
<dbReference type="HOGENOM" id="CLU_006105_0_2_1"/>
<dbReference type="OrthoDB" id="21890at5052"/>
<dbReference type="PhylomeDB" id="B0Y6C5"/>
<dbReference type="Proteomes" id="UP000001699">
    <property type="component" value="Unassembled WGS sequence"/>
</dbReference>
<dbReference type="GO" id="GO:0005576">
    <property type="term" value="C:extracellular region"/>
    <property type="evidence" value="ECO:0007669"/>
    <property type="project" value="UniProtKB-SubCell"/>
</dbReference>
<dbReference type="GO" id="GO:0005886">
    <property type="term" value="C:plasma membrane"/>
    <property type="evidence" value="ECO:0007669"/>
    <property type="project" value="TreeGrafter"/>
</dbReference>
<dbReference type="GO" id="GO:0004177">
    <property type="term" value="F:aminopeptidase activity"/>
    <property type="evidence" value="ECO:0007669"/>
    <property type="project" value="UniProtKB-KW"/>
</dbReference>
<dbReference type="GO" id="GO:0008239">
    <property type="term" value="F:dipeptidyl-peptidase activity"/>
    <property type="evidence" value="ECO:0007669"/>
    <property type="project" value="UniProtKB-EC"/>
</dbReference>
<dbReference type="GO" id="GO:0008236">
    <property type="term" value="F:serine-type peptidase activity"/>
    <property type="evidence" value="ECO:0007669"/>
    <property type="project" value="UniProtKB-KW"/>
</dbReference>
<dbReference type="GO" id="GO:0006508">
    <property type="term" value="P:proteolysis"/>
    <property type="evidence" value="ECO:0007669"/>
    <property type="project" value="UniProtKB-KW"/>
</dbReference>
<dbReference type="FunFam" id="3.40.50.1820:FF:000003">
    <property type="entry name" value="Dipeptidyl peptidase 4"/>
    <property type="match status" value="1"/>
</dbReference>
<dbReference type="FunFam" id="2.140.10.30:FF:000003">
    <property type="entry name" value="Probable dipeptidyl peptidase 4"/>
    <property type="match status" value="1"/>
</dbReference>
<dbReference type="Gene3D" id="3.40.50.1820">
    <property type="entry name" value="alpha/beta hydrolase"/>
    <property type="match status" value="1"/>
</dbReference>
<dbReference type="Gene3D" id="2.140.10.30">
    <property type="entry name" value="Dipeptidylpeptidase IV, N-terminal domain"/>
    <property type="match status" value="1"/>
</dbReference>
<dbReference type="InterPro" id="IPR029058">
    <property type="entry name" value="AB_hydrolase_fold"/>
</dbReference>
<dbReference type="InterPro" id="IPR001375">
    <property type="entry name" value="Peptidase_S9_cat"/>
</dbReference>
<dbReference type="InterPro" id="IPR002469">
    <property type="entry name" value="Peptidase_S9B_N"/>
</dbReference>
<dbReference type="InterPro" id="IPR050278">
    <property type="entry name" value="Serine_Prot_S9B/DPPIV"/>
</dbReference>
<dbReference type="PANTHER" id="PTHR11731:SF162">
    <property type="entry name" value="DIPEPTIDYL PEPTIDASE 4-RELATED"/>
    <property type="match status" value="1"/>
</dbReference>
<dbReference type="PANTHER" id="PTHR11731">
    <property type="entry name" value="PROTEASE FAMILY S9B,C DIPEPTIDYL-PEPTIDASE IV-RELATED"/>
    <property type="match status" value="1"/>
</dbReference>
<dbReference type="Pfam" id="PF00930">
    <property type="entry name" value="DPPIV_N"/>
    <property type="match status" value="1"/>
</dbReference>
<dbReference type="Pfam" id="PF00326">
    <property type="entry name" value="Peptidase_S9"/>
    <property type="match status" value="1"/>
</dbReference>
<dbReference type="SUPFAM" id="SSF53474">
    <property type="entry name" value="alpha/beta-Hydrolases"/>
    <property type="match status" value="1"/>
</dbReference>
<dbReference type="SUPFAM" id="SSF82171">
    <property type="entry name" value="DPP6 N-terminal domain-like"/>
    <property type="match status" value="1"/>
</dbReference>
<protein>
    <recommendedName>
        <fullName>Probable dipeptidyl peptidase 4</fullName>
        <ecNumber>3.4.14.5</ecNumber>
    </recommendedName>
    <alternativeName>
        <fullName>Dipeptidyl peptidase IV</fullName>
        <shortName>DPP IV</shortName>
        <shortName>DppIV</shortName>
    </alternativeName>
</protein>
<evidence type="ECO:0000250" key="1"/>
<evidence type="ECO:0000255" key="2"/>
<evidence type="ECO:0000269" key="3">
    <source>
    </source>
</evidence>
<evidence type="ECO:0000305" key="4"/>
<gene>
    <name type="primary">dpp4</name>
    <name type="ORF">AFUB_066450</name>
</gene>
<name>DPP4_ASPFC</name>